<keyword id="KW-0007">Acetylation</keyword>
<keyword id="KW-0067">ATP-binding</keyword>
<keyword id="KW-0131">Cell cycle</keyword>
<keyword id="KW-0158">Chromosome</keyword>
<keyword id="KW-0235">DNA replication</keyword>
<keyword id="KW-0238">DNA-binding</keyword>
<keyword id="KW-0325">Glycoprotein</keyword>
<keyword id="KW-0347">Helicase</keyword>
<keyword id="KW-0378">Hydrolase</keyword>
<keyword id="KW-0547">Nucleotide-binding</keyword>
<keyword id="KW-0539">Nucleus</keyword>
<keyword id="KW-0597">Phosphoprotein</keyword>
<keyword id="KW-1185">Reference proteome</keyword>
<feature type="chain" id="PRO_0000194115" description="DNA replication licensing factor MCM6">
    <location>
        <begin position="1" status="less than"/>
        <end position="507"/>
    </location>
</feature>
<feature type="domain" description="MCM">
    <location>
        <begin position="32"/>
        <end position="239"/>
    </location>
</feature>
<feature type="region of interest" description="Disordered" evidence="3">
    <location>
        <begin position="365"/>
        <end position="392"/>
    </location>
</feature>
<feature type="short sequence motif" description="Arginine finger">
    <location>
        <begin position="214"/>
        <end position="217"/>
    </location>
</feature>
<feature type="binding site" evidence="2">
    <location>
        <position position="45"/>
    </location>
    <ligand>
        <name>ATP</name>
        <dbReference type="ChEBI" id="CHEBI:30616"/>
        <note>ligand shared with MCM4</note>
    </ligand>
</feature>
<feature type="binding site" evidence="2">
    <location>
        <position position="85"/>
    </location>
    <ligand>
        <name>ATP</name>
        <dbReference type="ChEBI" id="CHEBI:30616"/>
        <note>ligand shared with MCM4</note>
    </ligand>
</feature>
<feature type="binding site" evidence="2">
    <location>
        <position position="86"/>
    </location>
    <ligand>
        <name>ATP</name>
        <dbReference type="ChEBI" id="CHEBI:30616"/>
        <note>ligand shared with MCM4</note>
    </ligand>
</feature>
<feature type="binding site" evidence="2">
    <location>
        <position position="87"/>
    </location>
    <ligand>
        <name>ATP</name>
        <dbReference type="ChEBI" id="CHEBI:30616"/>
        <note>ligand shared with MCM4</note>
    </ligand>
</feature>
<feature type="binding site" evidence="2">
    <location>
        <position position="88"/>
    </location>
    <ligand>
        <name>ATP</name>
        <dbReference type="ChEBI" id="CHEBI:30616"/>
        <note>ligand shared with MCM4</note>
    </ligand>
</feature>
<feature type="binding site" evidence="2">
    <location>
        <position position="89"/>
    </location>
    <ligand>
        <name>ATP</name>
        <dbReference type="ChEBI" id="CHEBI:30616"/>
        <note>ligand shared with MCM4</note>
    </ligand>
</feature>
<feature type="binding site" evidence="2">
    <location>
        <position position="190"/>
    </location>
    <ligand>
        <name>ATP</name>
        <dbReference type="ChEBI" id="CHEBI:30616"/>
        <note>ligand shared with MCM4</note>
    </ligand>
</feature>
<feature type="binding site" evidence="2">
    <location>
        <position position="305"/>
    </location>
    <ligand>
        <name>ADP</name>
        <dbReference type="ChEBI" id="CHEBI:456216"/>
        <note>ligand shared with MCM2</note>
    </ligand>
</feature>
<feature type="binding site" evidence="2">
    <location>
        <position position="308"/>
    </location>
    <ligand>
        <name>ADP</name>
        <dbReference type="ChEBI" id="CHEBI:456216"/>
        <note>ligand shared with MCM2</note>
    </ligand>
</feature>
<feature type="modified residue" description="N6-acetyllysine" evidence="1">
    <location>
        <position position="329"/>
    </location>
</feature>
<feature type="modified residue" description="Phosphoserine" evidence="1">
    <location>
        <position position="375"/>
    </location>
</feature>
<feature type="modified residue" description="Phosphoserine" evidence="1">
    <location>
        <position position="390"/>
    </location>
</feature>
<feature type="modified residue" description="Phosphoserine" evidence="5">
    <location>
        <position position="448"/>
    </location>
</feature>
<feature type="modified residue" description="Phosphothreonine" evidence="2">
    <location>
        <position position="477"/>
    </location>
</feature>
<feature type="non-terminal residue">
    <location>
        <position position="1"/>
    </location>
</feature>
<dbReference type="EC" id="3.6.4.12" evidence="1"/>
<dbReference type="EMBL" id="U17565">
    <property type="protein sequence ID" value="AAC18424.1"/>
    <property type="molecule type" value="mRNA"/>
</dbReference>
<dbReference type="PIR" id="T10753">
    <property type="entry name" value="T10753"/>
</dbReference>
<dbReference type="SMR" id="Q62724"/>
<dbReference type="FunCoup" id="Q62724">
    <property type="interactions" value="2121"/>
</dbReference>
<dbReference type="STRING" id="10116.ENSRNOP00000004969"/>
<dbReference type="iPTMnet" id="Q62724"/>
<dbReference type="jPOST" id="Q62724"/>
<dbReference type="PaxDb" id="10116-ENSRNOP00000004969"/>
<dbReference type="PeptideAtlas" id="Q62724"/>
<dbReference type="UCSC" id="RGD:61967">
    <property type="organism name" value="rat"/>
</dbReference>
<dbReference type="AGR" id="RGD:61967"/>
<dbReference type="RGD" id="61967">
    <property type="gene designation" value="Mcm6"/>
</dbReference>
<dbReference type="eggNOG" id="KOG0480">
    <property type="taxonomic scope" value="Eukaryota"/>
</dbReference>
<dbReference type="InParanoid" id="Q62724"/>
<dbReference type="PhylomeDB" id="Q62724"/>
<dbReference type="Proteomes" id="UP000002494">
    <property type="component" value="Unplaced"/>
</dbReference>
<dbReference type="GO" id="GO:0071162">
    <property type="term" value="C:CMG complex"/>
    <property type="evidence" value="ECO:0000250"/>
    <property type="project" value="UniProtKB"/>
</dbReference>
<dbReference type="GO" id="GO:0042555">
    <property type="term" value="C:MCM complex"/>
    <property type="evidence" value="ECO:0000250"/>
    <property type="project" value="UniProtKB"/>
</dbReference>
<dbReference type="GO" id="GO:0005634">
    <property type="term" value="C:nucleus"/>
    <property type="evidence" value="ECO:0000266"/>
    <property type="project" value="RGD"/>
</dbReference>
<dbReference type="GO" id="GO:0005524">
    <property type="term" value="F:ATP binding"/>
    <property type="evidence" value="ECO:0007669"/>
    <property type="project" value="UniProtKB-KW"/>
</dbReference>
<dbReference type="GO" id="GO:0016887">
    <property type="term" value="F:ATP hydrolysis activity"/>
    <property type="evidence" value="ECO:0007669"/>
    <property type="project" value="RHEA"/>
</dbReference>
<dbReference type="GO" id="GO:0004386">
    <property type="term" value="F:helicase activity"/>
    <property type="evidence" value="ECO:0007669"/>
    <property type="project" value="UniProtKB-KW"/>
</dbReference>
<dbReference type="GO" id="GO:0042802">
    <property type="term" value="F:identical protein binding"/>
    <property type="evidence" value="ECO:0000266"/>
    <property type="project" value="RGD"/>
</dbReference>
<dbReference type="GO" id="GO:0003697">
    <property type="term" value="F:single-stranded DNA binding"/>
    <property type="evidence" value="ECO:0000266"/>
    <property type="project" value="RGD"/>
</dbReference>
<dbReference type="GO" id="GO:0006260">
    <property type="term" value="P:DNA replication"/>
    <property type="evidence" value="ECO:0007669"/>
    <property type="project" value="UniProtKB-KW"/>
</dbReference>
<dbReference type="CDD" id="cd17757">
    <property type="entry name" value="MCM6"/>
    <property type="match status" value="1"/>
</dbReference>
<dbReference type="FunFam" id="1.20.58.870:FF:000001">
    <property type="entry name" value="DNA helicase"/>
    <property type="match status" value="1"/>
</dbReference>
<dbReference type="FunFam" id="3.40.50.300:FF:000115">
    <property type="entry name" value="DNA helicase"/>
    <property type="match status" value="1"/>
</dbReference>
<dbReference type="Gene3D" id="1.20.58.870">
    <property type="match status" value="1"/>
</dbReference>
<dbReference type="Gene3D" id="3.40.50.300">
    <property type="entry name" value="P-loop containing nucleotide triphosphate hydrolases"/>
    <property type="match status" value="1"/>
</dbReference>
<dbReference type="InterPro" id="IPR031327">
    <property type="entry name" value="MCM"/>
</dbReference>
<dbReference type="InterPro" id="IPR041024">
    <property type="entry name" value="Mcm6_C"/>
</dbReference>
<dbReference type="InterPro" id="IPR018525">
    <property type="entry name" value="MCM_CS"/>
</dbReference>
<dbReference type="InterPro" id="IPR001208">
    <property type="entry name" value="MCM_dom"/>
</dbReference>
<dbReference type="InterPro" id="IPR041562">
    <property type="entry name" value="MCM_lid"/>
</dbReference>
<dbReference type="InterPro" id="IPR027417">
    <property type="entry name" value="P-loop_NTPase"/>
</dbReference>
<dbReference type="PANTHER" id="PTHR11630">
    <property type="entry name" value="DNA REPLICATION LICENSING FACTOR MCM FAMILY MEMBER"/>
    <property type="match status" value="1"/>
</dbReference>
<dbReference type="PANTHER" id="PTHR11630:SF73">
    <property type="entry name" value="DNA REPLICATION LICENSING FACTOR MCM6"/>
    <property type="match status" value="1"/>
</dbReference>
<dbReference type="Pfam" id="PF00493">
    <property type="entry name" value="MCM"/>
    <property type="match status" value="1"/>
</dbReference>
<dbReference type="Pfam" id="PF18263">
    <property type="entry name" value="MCM6_C"/>
    <property type="match status" value="1"/>
</dbReference>
<dbReference type="Pfam" id="PF17855">
    <property type="entry name" value="MCM_lid"/>
    <property type="match status" value="1"/>
</dbReference>
<dbReference type="PRINTS" id="PR01657">
    <property type="entry name" value="MCMFAMILY"/>
</dbReference>
<dbReference type="SMART" id="SM00350">
    <property type="entry name" value="MCM"/>
    <property type="match status" value="1"/>
</dbReference>
<dbReference type="SUPFAM" id="SSF52540">
    <property type="entry name" value="P-loop containing nucleoside triphosphate hydrolases"/>
    <property type="match status" value="1"/>
</dbReference>
<dbReference type="PROSITE" id="PS00847">
    <property type="entry name" value="MCM_1"/>
    <property type="match status" value="1"/>
</dbReference>
<dbReference type="PROSITE" id="PS50051">
    <property type="entry name" value="MCM_2"/>
    <property type="match status" value="1"/>
</dbReference>
<gene>
    <name type="primary">Mcm6</name>
    <name type="synonym">Mcmd6</name>
</gene>
<sequence length="507" mass="57370">LRDEEQTAESIKNQMTVKEWEKVFEMSQDQNLYHNLCTSLFPTIHGNDEVKRGVLLMLFGGVPKTTGEGTSLRGDINVCIVGDPSTAKSQFLKHVDEFSPRAVYTSGKASSASGLTAAVVRDEESHEFVIEAGALMLADNGVCCIDEFDKMDMRDQVAIHEAMEQQTISITKAGVKATLNARTSILAAANPVSGHYDRSKSLKQNINLSAPIMSRFDLFFILVDECNEVTDYAIARRIVDLHSRIEESIDRVYSLDDIRRYLLFARQFKPKISKESEDFIVEQYKRLRQRDGSGITKSSWRITVRQLESMIRLSESMARMHCCDEVQPKHVKEAFRLLNKSIIRVETPDVNLDQEEEIQMETDEGPGGINGHADSPAPVNGFNGSGEDASQETVPKPSLRLAFAEYCRISNLIVLHLRKMEEEEDESALKRSELVNWYLKEIESEIDSEEELINKKRIIEKVVHRLTHYDHVLIELTQAGLKGSSEGSESYEEDPYLVVNPNYLLED</sequence>
<protein>
    <recommendedName>
        <fullName>DNA replication licensing factor MCM6</fullName>
        <ecNumber evidence="1">3.6.4.12</ecNumber>
    </recommendedName>
    <alternativeName>
        <fullName>Intestinal DNA replication protein</fullName>
    </alternativeName>
</protein>
<name>MCM6_RAT</name>
<accession>Q62724</accession>
<comment type="function">
    <text evidence="2">Acts as a component of the MCM2-7 complex (MCM complex) which is the replicative helicase essential for 'once per cell cycle' DNA replication initiation and elongation in eukaryotic cells. Core component of CDC45-MCM-GINS (CMG) helicase, the molecular machine that unwinds template DNA during replication, and around which the replisome is built. The active ATPase sites in the MCM2-7 ring are formed through the interaction surfaces of two neighboring subunits such that a critical structure of a conserved arginine finger motif is provided in trans relative to the ATP-binding site of the Walker A box of the adjacent subunit. The six ATPase active sites, however, are likely to contribute differentially to the complex helicase activity.</text>
</comment>
<comment type="catalytic activity">
    <reaction evidence="2">
        <text>ATP + H2O = ADP + phosphate + H(+)</text>
        <dbReference type="Rhea" id="RHEA:13065"/>
        <dbReference type="ChEBI" id="CHEBI:15377"/>
        <dbReference type="ChEBI" id="CHEBI:15378"/>
        <dbReference type="ChEBI" id="CHEBI:30616"/>
        <dbReference type="ChEBI" id="CHEBI:43474"/>
        <dbReference type="ChEBI" id="CHEBI:456216"/>
        <dbReference type="EC" id="3.6.4.12"/>
    </reaction>
    <physiologicalReaction direction="left-to-right" evidence="2">
        <dbReference type="Rhea" id="RHEA:13066"/>
    </physiologicalReaction>
</comment>
<comment type="subunit">
    <text evidence="2">Component of the MCM2-7 complex. The complex forms a toroidal hexameric ring with the proposed subunit order MCM2-MCM6-MCM4-MCM7-MCM3-MCM5. Component of the CMG helicase complex, a hexameric ring of related MCM2-7 subunits stabilized by CDC45 and the tetrameric GINS complex. May interact with MCM10. Interacts with TIPIN. Interacts with CDT1. Interacts with MCMBP. Interacts with DDI2.</text>
</comment>
<comment type="subcellular location">
    <subcellularLocation>
        <location evidence="2">Nucleus</location>
    </subcellularLocation>
    <subcellularLocation>
        <location evidence="2">Chromosome</location>
    </subcellularLocation>
    <text evidence="2">Binds to chromatin during G1 and detaches from it during S phase.</text>
</comment>
<comment type="PTM">
    <text evidence="2">O-glycosylated (O-GlcNAcylated), in a cell cycle-dependent manner.</text>
</comment>
<comment type="miscellaneous">
    <text evidence="1">Early fractionation of eukaryotic MCM proteins yielded a variety of dimeric, trimeric and tetrameric complexes with unclear biological significance. Specifically a MCM467 subcomplex is shown to have in vitro helicase activity which is inhibited by the MCM2 subunit. The MCM2-7 hexamer is the proposed physiological active complex.</text>
</comment>
<comment type="similarity">
    <text evidence="4">Belongs to the MCM family.</text>
</comment>
<proteinExistence type="evidence at protein level"/>
<organism>
    <name type="scientific">Rattus norvegicus</name>
    <name type="common">Rat</name>
    <dbReference type="NCBI Taxonomy" id="10116"/>
    <lineage>
        <taxon>Eukaryota</taxon>
        <taxon>Metazoa</taxon>
        <taxon>Chordata</taxon>
        <taxon>Craniata</taxon>
        <taxon>Vertebrata</taxon>
        <taxon>Euteleostomi</taxon>
        <taxon>Mammalia</taxon>
        <taxon>Eutheria</taxon>
        <taxon>Euarchontoglires</taxon>
        <taxon>Glires</taxon>
        <taxon>Rodentia</taxon>
        <taxon>Myomorpha</taxon>
        <taxon>Muroidea</taxon>
        <taxon>Muridae</taxon>
        <taxon>Murinae</taxon>
        <taxon>Rattus</taxon>
    </lineage>
</organism>
<reference key="1">
    <citation type="journal article" date="1995" name="Gene">
        <title>Rat intestinal crypt-cell replication factor with homology to early S-phase proteins required for cell division.</title>
        <authorList>
            <person name="Sykes D.E."/>
            <person name="Weiser M.M."/>
        </authorList>
    </citation>
    <scope>NUCLEOTIDE SEQUENCE [MRNA]</scope>
    <source>
        <strain>Holtzman</strain>
        <tissue>Intestine</tissue>
    </source>
</reference>
<reference key="2">
    <citation type="submission" date="1998-05" db="EMBL/GenBank/DDBJ databases">
        <authorList>
            <person name="Sykes D.E."/>
        </authorList>
    </citation>
    <scope>SEQUENCE REVISION</scope>
</reference>
<reference key="3">
    <citation type="journal article" date="2012" name="Nat. Commun.">
        <title>Quantitative maps of protein phosphorylation sites across 14 different rat organs and tissues.</title>
        <authorList>
            <person name="Lundby A."/>
            <person name="Secher A."/>
            <person name="Lage K."/>
            <person name="Nordsborg N.B."/>
            <person name="Dmytriyev A."/>
            <person name="Lundby C."/>
            <person name="Olsen J.V."/>
        </authorList>
    </citation>
    <scope>PHOSPHORYLATION [LARGE SCALE ANALYSIS] AT SER-448</scope>
    <scope>IDENTIFICATION BY MASS SPECTROMETRY [LARGE SCALE ANALYSIS]</scope>
</reference>
<evidence type="ECO:0000250" key="1">
    <source>
        <dbReference type="UniProtKB" id="P97311"/>
    </source>
</evidence>
<evidence type="ECO:0000250" key="2">
    <source>
        <dbReference type="UniProtKB" id="Q14566"/>
    </source>
</evidence>
<evidence type="ECO:0000256" key="3">
    <source>
        <dbReference type="SAM" id="MobiDB-lite"/>
    </source>
</evidence>
<evidence type="ECO:0000305" key="4"/>
<evidence type="ECO:0007744" key="5">
    <source>
    </source>
</evidence>